<gene>
    <name evidence="1" type="primary">rplM</name>
    <name type="ordered locus">Bcer98_0137</name>
</gene>
<comment type="function">
    <text evidence="1">This protein is one of the early assembly proteins of the 50S ribosomal subunit, although it is not seen to bind rRNA by itself. It is important during the early stages of 50S assembly.</text>
</comment>
<comment type="subunit">
    <text evidence="1">Part of the 50S ribosomal subunit.</text>
</comment>
<comment type="similarity">
    <text evidence="1">Belongs to the universal ribosomal protein uL13 family.</text>
</comment>
<feature type="chain" id="PRO_1000087075" description="Large ribosomal subunit protein uL13">
    <location>
        <begin position="1"/>
        <end position="145"/>
    </location>
</feature>
<accession>A7GK53</accession>
<proteinExistence type="inferred from homology"/>
<sequence>MRTTFMAKANEVERKWYVVDAEGQTLGRLASEVASILRGKHKPTFTPHVDTGDHVIIINAEKVHLTGNKLNDKIYYRHTQHPGGLKQRTALEMRTNYPVQMLELAIKGMLPKGRLGRQMSKKLNVYAGAEHPHQAQKPEVYELRG</sequence>
<protein>
    <recommendedName>
        <fullName evidence="1">Large ribosomal subunit protein uL13</fullName>
    </recommendedName>
    <alternativeName>
        <fullName evidence="2">50S ribosomal protein L13</fullName>
    </alternativeName>
</protein>
<name>RL13_BACCN</name>
<organism>
    <name type="scientific">Bacillus cytotoxicus (strain DSM 22905 / CIP 110041 / 391-98 / NVH 391-98)</name>
    <dbReference type="NCBI Taxonomy" id="315749"/>
    <lineage>
        <taxon>Bacteria</taxon>
        <taxon>Bacillati</taxon>
        <taxon>Bacillota</taxon>
        <taxon>Bacilli</taxon>
        <taxon>Bacillales</taxon>
        <taxon>Bacillaceae</taxon>
        <taxon>Bacillus</taxon>
        <taxon>Bacillus cereus group</taxon>
    </lineage>
</organism>
<reference key="1">
    <citation type="journal article" date="2008" name="Chem. Biol. Interact.">
        <title>Extending the Bacillus cereus group genomics to putative food-borne pathogens of different toxicity.</title>
        <authorList>
            <person name="Lapidus A."/>
            <person name="Goltsman E."/>
            <person name="Auger S."/>
            <person name="Galleron N."/>
            <person name="Segurens B."/>
            <person name="Dossat C."/>
            <person name="Land M.L."/>
            <person name="Broussolle V."/>
            <person name="Brillard J."/>
            <person name="Guinebretiere M.-H."/>
            <person name="Sanchis V."/>
            <person name="Nguen-the C."/>
            <person name="Lereclus D."/>
            <person name="Richardson P."/>
            <person name="Wincker P."/>
            <person name="Weissenbach J."/>
            <person name="Ehrlich S.D."/>
            <person name="Sorokin A."/>
        </authorList>
    </citation>
    <scope>NUCLEOTIDE SEQUENCE [LARGE SCALE GENOMIC DNA]</scope>
    <source>
        <strain>DSM 22905 / CIP 110041 / 391-98 / NVH 391-98</strain>
    </source>
</reference>
<keyword id="KW-0687">Ribonucleoprotein</keyword>
<keyword id="KW-0689">Ribosomal protein</keyword>
<dbReference type="EMBL" id="CP000764">
    <property type="protein sequence ID" value="ABS20511.1"/>
    <property type="molecule type" value="Genomic_DNA"/>
</dbReference>
<dbReference type="RefSeq" id="WP_011983272.1">
    <property type="nucleotide sequence ID" value="NC_009674.1"/>
</dbReference>
<dbReference type="SMR" id="A7GK53"/>
<dbReference type="STRING" id="315749.Bcer98_0137"/>
<dbReference type="GeneID" id="33895458"/>
<dbReference type="KEGG" id="bcy:Bcer98_0137"/>
<dbReference type="eggNOG" id="COG0102">
    <property type="taxonomic scope" value="Bacteria"/>
</dbReference>
<dbReference type="HOGENOM" id="CLU_082184_2_2_9"/>
<dbReference type="OrthoDB" id="9801330at2"/>
<dbReference type="Proteomes" id="UP000002300">
    <property type="component" value="Chromosome"/>
</dbReference>
<dbReference type="GO" id="GO:0022625">
    <property type="term" value="C:cytosolic large ribosomal subunit"/>
    <property type="evidence" value="ECO:0007669"/>
    <property type="project" value="TreeGrafter"/>
</dbReference>
<dbReference type="GO" id="GO:0003729">
    <property type="term" value="F:mRNA binding"/>
    <property type="evidence" value="ECO:0007669"/>
    <property type="project" value="TreeGrafter"/>
</dbReference>
<dbReference type="GO" id="GO:0003735">
    <property type="term" value="F:structural constituent of ribosome"/>
    <property type="evidence" value="ECO:0007669"/>
    <property type="project" value="InterPro"/>
</dbReference>
<dbReference type="GO" id="GO:0017148">
    <property type="term" value="P:negative regulation of translation"/>
    <property type="evidence" value="ECO:0007669"/>
    <property type="project" value="TreeGrafter"/>
</dbReference>
<dbReference type="GO" id="GO:0006412">
    <property type="term" value="P:translation"/>
    <property type="evidence" value="ECO:0007669"/>
    <property type="project" value="UniProtKB-UniRule"/>
</dbReference>
<dbReference type="CDD" id="cd00392">
    <property type="entry name" value="Ribosomal_L13"/>
    <property type="match status" value="1"/>
</dbReference>
<dbReference type="FunFam" id="3.90.1180.10:FF:000001">
    <property type="entry name" value="50S ribosomal protein L13"/>
    <property type="match status" value="1"/>
</dbReference>
<dbReference type="Gene3D" id="3.90.1180.10">
    <property type="entry name" value="Ribosomal protein L13"/>
    <property type="match status" value="1"/>
</dbReference>
<dbReference type="HAMAP" id="MF_01366">
    <property type="entry name" value="Ribosomal_uL13"/>
    <property type="match status" value="1"/>
</dbReference>
<dbReference type="InterPro" id="IPR005822">
    <property type="entry name" value="Ribosomal_uL13"/>
</dbReference>
<dbReference type="InterPro" id="IPR005823">
    <property type="entry name" value="Ribosomal_uL13_bac-type"/>
</dbReference>
<dbReference type="InterPro" id="IPR023563">
    <property type="entry name" value="Ribosomal_uL13_CS"/>
</dbReference>
<dbReference type="InterPro" id="IPR036899">
    <property type="entry name" value="Ribosomal_uL13_sf"/>
</dbReference>
<dbReference type="NCBIfam" id="TIGR01066">
    <property type="entry name" value="rplM_bact"/>
    <property type="match status" value="1"/>
</dbReference>
<dbReference type="PANTHER" id="PTHR11545:SF2">
    <property type="entry name" value="LARGE RIBOSOMAL SUBUNIT PROTEIN UL13M"/>
    <property type="match status" value="1"/>
</dbReference>
<dbReference type="PANTHER" id="PTHR11545">
    <property type="entry name" value="RIBOSOMAL PROTEIN L13"/>
    <property type="match status" value="1"/>
</dbReference>
<dbReference type="Pfam" id="PF00572">
    <property type="entry name" value="Ribosomal_L13"/>
    <property type="match status" value="1"/>
</dbReference>
<dbReference type="PIRSF" id="PIRSF002181">
    <property type="entry name" value="Ribosomal_L13"/>
    <property type="match status" value="1"/>
</dbReference>
<dbReference type="SUPFAM" id="SSF52161">
    <property type="entry name" value="Ribosomal protein L13"/>
    <property type="match status" value="1"/>
</dbReference>
<dbReference type="PROSITE" id="PS00783">
    <property type="entry name" value="RIBOSOMAL_L13"/>
    <property type="match status" value="1"/>
</dbReference>
<evidence type="ECO:0000255" key="1">
    <source>
        <dbReference type="HAMAP-Rule" id="MF_01366"/>
    </source>
</evidence>
<evidence type="ECO:0000305" key="2"/>